<sequence>MSKQILILPGDGIGPEIMTEAVKVLELANEKYQLGFELTHDVIGGAAIDKHGVPLADETLDRARAADAVLLGAVGGPKWDTIERDIRPERGLLKIRSQLGLFGNLRPAILYPQLADASSLKPEIVAGLDILIVRELTGGIYFGAPRGTRVLDNGERQAYDTLPYSESEIRRIAKVGFDMAMVRGKKLCSVDKANVLASSQLWREIVEQVAKDYPEVELSHMYVDNAAMQLVRAPKQFDVIVTDNLFGDILSDQASMLTGSIGMLPSASLDTANKGMYEPCHGSAPDIAGKGIANPLATILSVSMMLRYSFNLTDAADAIEKAVSVVLDQGIRTGDIWSEGKVKVGTQEMGDAVVAALRNL</sequence>
<protein>
    <recommendedName>
        <fullName evidence="1">3-isopropylmalate dehydrogenase</fullName>
        <ecNumber evidence="1">1.1.1.85</ecNumber>
    </recommendedName>
    <alternativeName>
        <fullName evidence="1">3-IPM-DH</fullName>
    </alternativeName>
    <alternativeName>
        <fullName evidence="1">Beta-IPM dehydrogenase</fullName>
        <shortName evidence="1">IMDH</shortName>
    </alternativeName>
</protein>
<reference key="1">
    <citation type="journal article" date="2005" name="J. Bacteriol.">
        <title>Whole-genome sequence analysis of Pseudomonas syringae pv. phaseolicola 1448A reveals divergence among pathovars in genes involved in virulence and transposition.</title>
        <authorList>
            <person name="Joardar V."/>
            <person name="Lindeberg M."/>
            <person name="Jackson R.W."/>
            <person name="Selengut J."/>
            <person name="Dodson R."/>
            <person name="Brinkac L.M."/>
            <person name="Daugherty S.C."/>
            <person name="DeBoy R.T."/>
            <person name="Durkin A.S."/>
            <person name="Gwinn Giglio M."/>
            <person name="Madupu R."/>
            <person name="Nelson W.C."/>
            <person name="Rosovitz M.J."/>
            <person name="Sullivan S.A."/>
            <person name="Crabtree J."/>
            <person name="Creasy T."/>
            <person name="Davidsen T.M."/>
            <person name="Haft D.H."/>
            <person name="Zafar N."/>
            <person name="Zhou L."/>
            <person name="Halpin R."/>
            <person name="Holley T."/>
            <person name="Khouri H.M."/>
            <person name="Feldblyum T.V."/>
            <person name="White O."/>
            <person name="Fraser C.M."/>
            <person name="Chatterjee A.K."/>
            <person name="Cartinhour S."/>
            <person name="Schneider D."/>
            <person name="Mansfield J.W."/>
            <person name="Collmer A."/>
            <person name="Buell R."/>
        </authorList>
    </citation>
    <scope>NUCLEOTIDE SEQUENCE [LARGE SCALE GENOMIC DNA]</scope>
    <source>
        <strain>1448A / Race 6</strain>
    </source>
</reference>
<feature type="chain" id="PRO_0000083730" description="3-isopropylmalate dehydrogenase">
    <location>
        <begin position="1"/>
        <end position="360"/>
    </location>
</feature>
<feature type="binding site" evidence="1">
    <location>
        <begin position="76"/>
        <end position="89"/>
    </location>
    <ligand>
        <name>NAD(+)</name>
        <dbReference type="ChEBI" id="CHEBI:57540"/>
    </ligand>
</feature>
<feature type="binding site" evidence="1">
    <location>
        <position position="96"/>
    </location>
    <ligand>
        <name>substrate</name>
    </ligand>
</feature>
<feature type="binding site" evidence="1">
    <location>
        <position position="106"/>
    </location>
    <ligand>
        <name>substrate</name>
    </ligand>
</feature>
<feature type="binding site" evidence="1">
    <location>
        <position position="134"/>
    </location>
    <ligand>
        <name>substrate</name>
    </ligand>
</feature>
<feature type="binding site" evidence="1">
    <location>
        <position position="224"/>
    </location>
    <ligand>
        <name>Mg(2+)</name>
        <dbReference type="ChEBI" id="CHEBI:18420"/>
    </ligand>
</feature>
<feature type="binding site" evidence="1">
    <location>
        <position position="224"/>
    </location>
    <ligand>
        <name>substrate</name>
    </ligand>
</feature>
<feature type="binding site" evidence="1">
    <location>
        <position position="248"/>
    </location>
    <ligand>
        <name>Mg(2+)</name>
        <dbReference type="ChEBI" id="CHEBI:18420"/>
    </ligand>
</feature>
<feature type="binding site" evidence="1">
    <location>
        <position position="252"/>
    </location>
    <ligand>
        <name>Mg(2+)</name>
        <dbReference type="ChEBI" id="CHEBI:18420"/>
    </ligand>
</feature>
<feature type="binding site" evidence="1">
    <location>
        <begin position="282"/>
        <end position="294"/>
    </location>
    <ligand>
        <name>NAD(+)</name>
        <dbReference type="ChEBI" id="CHEBI:57540"/>
    </ligand>
</feature>
<feature type="site" description="Important for catalysis" evidence="1">
    <location>
        <position position="141"/>
    </location>
</feature>
<feature type="site" description="Important for catalysis" evidence="1">
    <location>
        <position position="192"/>
    </location>
</feature>
<gene>
    <name evidence="1" type="primary">leuB</name>
    <name type="ordered locus">PSPPH_1954</name>
</gene>
<name>LEU3_PSE14</name>
<comment type="function">
    <text evidence="1">Catalyzes the oxidation of 3-carboxy-2-hydroxy-4-methylpentanoate (3-isopropylmalate) to 3-carboxy-4-methyl-2-oxopentanoate. The product decarboxylates to 4-methyl-2 oxopentanoate.</text>
</comment>
<comment type="catalytic activity">
    <reaction evidence="1">
        <text>(2R,3S)-3-isopropylmalate + NAD(+) = 4-methyl-2-oxopentanoate + CO2 + NADH</text>
        <dbReference type="Rhea" id="RHEA:32271"/>
        <dbReference type="ChEBI" id="CHEBI:16526"/>
        <dbReference type="ChEBI" id="CHEBI:17865"/>
        <dbReference type="ChEBI" id="CHEBI:35121"/>
        <dbReference type="ChEBI" id="CHEBI:57540"/>
        <dbReference type="ChEBI" id="CHEBI:57945"/>
        <dbReference type="EC" id="1.1.1.85"/>
    </reaction>
</comment>
<comment type="cofactor">
    <cofactor evidence="1">
        <name>Mg(2+)</name>
        <dbReference type="ChEBI" id="CHEBI:18420"/>
    </cofactor>
    <cofactor evidence="1">
        <name>Mn(2+)</name>
        <dbReference type="ChEBI" id="CHEBI:29035"/>
    </cofactor>
    <text evidence="1">Binds 1 Mg(2+) or Mn(2+) ion per subunit.</text>
</comment>
<comment type="pathway">
    <text evidence="1">Amino-acid biosynthesis; L-leucine biosynthesis; L-leucine from 3-methyl-2-oxobutanoate: step 3/4.</text>
</comment>
<comment type="subunit">
    <text evidence="1">Homodimer.</text>
</comment>
<comment type="subcellular location">
    <subcellularLocation>
        <location evidence="1">Cytoplasm</location>
    </subcellularLocation>
</comment>
<comment type="similarity">
    <text evidence="1">Belongs to the isocitrate and isopropylmalate dehydrogenases family. LeuB type 1 subfamily.</text>
</comment>
<accession>Q48K97</accession>
<organism>
    <name type="scientific">Pseudomonas savastanoi pv. phaseolicola (strain 1448A / Race 6)</name>
    <name type="common">Pseudomonas syringae pv. phaseolicola (strain 1448A / Race 6)</name>
    <dbReference type="NCBI Taxonomy" id="264730"/>
    <lineage>
        <taxon>Bacteria</taxon>
        <taxon>Pseudomonadati</taxon>
        <taxon>Pseudomonadota</taxon>
        <taxon>Gammaproteobacteria</taxon>
        <taxon>Pseudomonadales</taxon>
        <taxon>Pseudomonadaceae</taxon>
        <taxon>Pseudomonas</taxon>
    </lineage>
</organism>
<dbReference type="EC" id="1.1.1.85" evidence="1"/>
<dbReference type="EMBL" id="CP000058">
    <property type="protein sequence ID" value="AAZ34708.1"/>
    <property type="molecule type" value="Genomic_DNA"/>
</dbReference>
<dbReference type="RefSeq" id="WP_004658980.1">
    <property type="nucleotide sequence ID" value="NC_005773.3"/>
</dbReference>
<dbReference type="SMR" id="Q48K97"/>
<dbReference type="GeneID" id="69858897"/>
<dbReference type="KEGG" id="psp:PSPPH_1954"/>
<dbReference type="eggNOG" id="COG0473">
    <property type="taxonomic scope" value="Bacteria"/>
</dbReference>
<dbReference type="HOGENOM" id="CLU_031953_0_3_6"/>
<dbReference type="UniPathway" id="UPA00048">
    <property type="reaction ID" value="UER00072"/>
</dbReference>
<dbReference type="Proteomes" id="UP000000551">
    <property type="component" value="Chromosome"/>
</dbReference>
<dbReference type="GO" id="GO:0005829">
    <property type="term" value="C:cytosol"/>
    <property type="evidence" value="ECO:0007669"/>
    <property type="project" value="TreeGrafter"/>
</dbReference>
<dbReference type="GO" id="GO:0003862">
    <property type="term" value="F:3-isopropylmalate dehydrogenase activity"/>
    <property type="evidence" value="ECO:0007669"/>
    <property type="project" value="UniProtKB-UniRule"/>
</dbReference>
<dbReference type="GO" id="GO:0000287">
    <property type="term" value="F:magnesium ion binding"/>
    <property type="evidence" value="ECO:0007669"/>
    <property type="project" value="InterPro"/>
</dbReference>
<dbReference type="GO" id="GO:0051287">
    <property type="term" value="F:NAD binding"/>
    <property type="evidence" value="ECO:0007669"/>
    <property type="project" value="InterPro"/>
</dbReference>
<dbReference type="GO" id="GO:0009098">
    <property type="term" value="P:L-leucine biosynthetic process"/>
    <property type="evidence" value="ECO:0007669"/>
    <property type="project" value="UniProtKB-UniRule"/>
</dbReference>
<dbReference type="FunFam" id="3.40.718.10:FF:000004">
    <property type="entry name" value="3-isopropylmalate dehydrogenase"/>
    <property type="match status" value="1"/>
</dbReference>
<dbReference type="Gene3D" id="3.40.718.10">
    <property type="entry name" value="Isopropylmalate Dehydrogenase"/>
    <property type="match status" value="1"/>
</dbReference>
<dbReference type="HAMAP" id="MF_01033">
    <property type="entry name" value="LeuB_type1"/>
    <property type="match status" value="1"/>
</dbReference>
<dbReference type="InterPro" id="IPR019818">
    <property type="entry name" value="IsoCit/isopropylmalate_DH_CS"/>
</dbReference>
<dbReference type="InterPro" id="IPR024084">
    <property type="entry name" value="IsoPropMal-DH-like_dom"/>
</dbReference>
<dbReference type="InterPro" id="IPR004429">
    <property type="entry name" value="Isopropylmalate_DH"/>
</dbReference>
<dbReference type="NCBIfam" id="TIGR00169">
    <property type="entry name" value="leuB"/>
    <property type="match status" value="1"/>
</dbReference>
<dbReference type="PANTHER" id="PTHR42979">
    <property type="entry name" value="3-ISOPROPYLMALATE DEHYDROGENASE"/>
    <property type="match status" value="1"/>
</dbReference>
<dbReference type="PANTHER" id="PTHR42979:SF1">
    <property type="entry name" value="3-ISOPROPYLMALATE DEHYDROGENASE"/>
    <property type="match status" value="1"/>
</dbReference>
<dbReference type="Pfam" id="PF00180">
    <property type="entry name" value="Iso_dh"/>
    <property type="match status" value="1"/>
</dbReference>
<dbReference type="SMART" id="SM01329">
    <property type="entry name" value="Iso_dh"/>
    <property type="match status" value="1"/>
</dbReference>
<dbReference type="SUPFAM" id="SSF53659">
    <property type="entry name" value="Isocitrate/Isopropylmalate dehydrogenase-like"/>
    <property type="match status" value="1"/>
</dbReference>
<dbReference type="PROSITE" id="PS00470">
    <property type="entry name" value="IDH_IMDH"/>
    <property type="match status" value="1"/>
</dbReference>
<proteinExistence type="inferred from homology"/>
<keyword id="KW-0028">Amino-acid biosynthesis</keyword>
<keyword id="KW-0100">Branched-chain amino acid biosynthesis</keyword>
<keyword id="KW-0963">Cytoplasm</keyword>
<keyword id="KW-0432">Leucine biosynthesis</keyword>
<keyword id="KW-0460">Magnesium</keyword>
<keyword id="KW-0464">Manganese</keyword>
<keyword id="KW-0479">Metal-binding</keyword>
<keyword id="KW-0520">NAD</keyword>
<keyword id="KW-0560">Oxidoreductase</keyword>
<evidence type="ECO:0000255" key="1">
    <source>
        <dbReference type="HAMAP-Rule" id="MF_01033"/>
    </source>
</evidence>